<sequence length="259" mass="28647">MPEDILVDIKRDYVLSKLRDNERIDGRGFDEFRKVEIIPNVIEKAEGSALVKLGDTQVVVGVKMQPGEPYPDTPDRGVIIVNAELVPLASPTFEPGPPDENSIELARVVDRGIRESEAVDLSKLVIEEGEKVWIVFVDIHALDDDGNLLDASALAAIAALMNTKVPAERFDLGEDYLLPVRDLPVSVTSLIVGNKYLVDPSREEMSVGDTTLTITTDKDDNVVAMQKSGGYLLDEKLFDELLDVSINCARKLREKFKEI</sequence>
<accession>O29756</accession>
<keyword id="KW-0002">3D-structure</keyword>
<keyword id="KW-0963">Cytoplasm</keyword>
<keyword id="KW-0271">Exosome</keyword>
<keyword id="KW-1185">Reference proteome</keyword>
<gene>
    <name evidence="1" type="primary">rrp42</name>
    <name type="ordered locus">AF_0494</name>
</gene>
<proteinExistence type="evidence at protein level"/>
<dbReference type="EMBL" id="AE000782">
    <property type="protein sequence ID" value="AAB90743.1"/>
    <property type="molecule type" value="Genomic_DNA"/>
</dbReference>
<dbReference type="PIR" id="F69311">
    <property type="entry name" value="F69311"/>
</dbReference>
<dbReference type="RefSeq" id="WP_010878001.1">
    <property type="nucleotide sequence ID" value="NC_000917.1"/>
</dbReference>
<dbReference type="PDB" id="2BA0">
    <property type="method" value="X-ray"/>
    <property type="resolution" value="2.70 A"/>
    <property type="chains" value="G/H/I=1-259"/>
</dbReference>
<dbReference type="PDB" id="2BA1">
    <property type="method" value="X-ray"/>
    <property type="resolution" value="2.70 A"/>
    <property type="chains" value="G/H/I=1-259"/>
</dbReference>
<dbReference type="PDB" id="3M7N">
    <property type="method" value="X-ray"/>
    <property type="resolution" value="2.40 A"/>
    <property type="chains" value="G/H/I=1-259"/>
</dbReference>
<dbReference type="PDB" id="3M85">
    <property type="method" value="X-ray"/>
    <property type="resolution" value="3.00 A"/>
    <property type="chains" value="G/H/I=1-259"/>
</dbReference>
<dbReference type="PDBsum" id="2BA0"/>
<dbReference type="PDBsum" id="2BA1"/>
<dbReference type="PDBsum" id="3M7N"/>
<dbReference type="PDBsum" id="3M85"/>
<dbReference type="SMR" id="O29756"/>
<dbReference type="STRING" id="224325.AF_0494"/>
<dbReference type="PaxDb" id="224325-AF_0494"/>
<dbReference type="EnsemblBacteria" id="AAB90743">
    <property type="protein sequence ID" value="AAB90743"/>
    <property type="gene ID" value="AF_0494"/>
</dbReference>
<dbReference type="GeneID" id="24794034"/>
<dbReference type="KEGG" id="afu:AF_0494"/>
<dbReference type="eggNOG" id="arCOG01574">
    <property type="taxonomic scope" value="Archaea"/>
</dbReference>
<dbReference type="HOGENOM" id="CLU_038194_0_0_2"/>
<dbReference type="OrthoDB" id="30932at2157"/>
<dbReference type="PhylomeDB" id="O29756"/>
<dbReference type="EvolutionaryTrace" id="O29756"/>
<dbReference type="Proteomes" id="UP000002199">
    <property type="component" value="Chromosome"/>
</dbReference>
<dbReference type="GO" id="GO:0000177">
    <property type="term" value="C:cytoplasmic exosome (RNase complex)"/>
    <property type="evidence" value="ECO:0007669"/>
    <property type="project" value="TreeGrafter"/>
</dbReference>
<dbReference type="GO" id="GO:0035925">
    <property type="term" value="F:mRNA 3'-UTR AU-rich region binding"/>
    <property type="evidence" value="ECO:0007669"/>
    <property type="project" value="TreeGrafter"/>
</dbReference>
<dbReference type="GO" id="GO:0016075">
    <property type="term" value="P:rRNA catabolic process"/>
    <property type="evidence" value="ECO:0007669"/>
    <property type="project" value="TreeGrafter"/>
</dbReference>
<dbReference type="CDD" id="cd11365">
    <property type="entry name" value="RNase_PH_archRRP42"/>
    <property type="match status" value="1"/>
</dbReference>
<dbReference type="FunFam" id="3.30.230.70:FF:000017">
    <property type="entry name" value="Exosome complex component Rrp42"/>
    <property type="match status" value="1"/>
</dbReference>
<dbReference type="Gene3D" id="3.30.230.70">
    <property type="entry name" value="GHMP Kinase, N-terminal domain"/>
    <property type="match status" value="1"/>
</dbReference>
<dbReference type="HAMAP" id="MF_00622">
    <property type="entry name" value="Exosome_Rrp42"/>
    <property type="match status" value="1"/>
</dbReference>
<dbReference type="InterPro" id="IPR001247">
    <property type="entry name" value="ExoRNase_PH_dom1"/>
</dbReference>
<dbReference type="InterPro" id="IPR015847">
    <property type="entry name" value="ExoRNase_PH_dom2"/>
</dbReference>
<dbReference type="InterPro" id="IPR036345">
    <property type="entry name" value="ExoRNase_PH_dom2_sf"/>
</dbReference>
<dbReference type="InterPro" id="IPR050590">
    <property type="entry name" value="Exosome_comp_Rrp42_subfam"/>
</dbReference>
<dbReference type="InterPro" id="IPR027408">
    <property type="entry name" value="PNPase/RNase_PH_dom_sf"/>
</dbReference>
<dbReference type="InterPro" id="IPR020568">
    <property type="entry name" value="Ribosomal_Su5_D2-typ_SF"/>
</dbReference>
<dbReference type="InterPro" id="IPR020869">
    <property type="entry name" value="Rrp42_archaea"/>
</dbReference>
<dbReference type="NCBIfam" id="NF003282">
    <property type="entry name" value="PRK04282.1-1"/>
    <property type="match status" value="1"/>
</dbReference>
<dbReference type="PANTHER" id="PTHR11097:SF8">
    <property type="entry name" value="EXOSOME COMPLEX COMPONENT RRP42"/>
    <property type="match status" value="1"/>
</dbReference>
<dbReference type="PANTHER" id="PTHR11097">
    <property type="entry name" value="EXOSOME COMPLEX EXONUCLEASE RIBOSOMAL RNA PROCESSING PROTEIN"/>
    <property type="match status" value="1"/>
</dbReference>
<dbReference type="Pfam" id="PF01138">
    <property type="entry name" value="RNase_PH"/>
    <property type="match status" value="1"/>
</dbReference>
<dbReference type="Pfam" id="PF03725">
    <property type="entry name" value="RNase_PH_C"/>
    <property type="match status" value="1"/>
</dbReference>
<dbReference type="SUPFAM" id="SSF55666">
    <property type="entry name" value="Ribonuclease PH domain 2-like"/>
    <property type="match status" value="1"/>
</dbReference>
<dbReference type="SUPFAM" id="SSF54211">
    <property type="entry name" value="Ribosomal protein S5 domain 2-like"/>
    <property type="match status" value="1"/>
</dbReference>
<organism>
    <name type="scientific">Archaeoglobus fulgidus (strain ATCC 49558 / DSM 4304 / JCM 9628 / NBRC 100126 / VC-16)</name>
    <dbReference type="NCBI Taxonomy" id="224325"/>
    <lineage>
        <taxon>Archaea</taxon>
        <taxon>Methanobacteriati</taxon>
        <taxon>Methanobacteriota</taxon>
        <taxon>Archaeoglobi</taxon>
        <taxon>Archaeoglobales</taxon>
        <taxon>Archaeoglobaceae</taxon>
        <taxon>Archaeoglobus</taxon>
    </lineage>
</organism>
<name>RRP42_ARCFU</name>
<evidence type="ECO:0000255" key="1">
    <source>
        <dbReference type="HAMAP-Rule" id="MF_00622"/>
    </source>
</evidence>
<evidence type="ECO:0000269" key="2">
    <source>
    </source>
</evidence>
<evidence type="ECO:0000269" key="3">
    <source>
    </source>
</evidence>
<evidence type="ECO:0007829" key="4">
    <source>
        <dbReference type="PDB" id="3M7N"/>
    </source>
</evidence>
<evidence type="ECO:0007829" key="5">
    <source>
        <dbReference type="PDB" id="3M85"/>
    </source>
</evidence>
<reference key="1">
    <citation type="journal article" date="1997" name="Nature">
        <title>The complete genome sequence of the hyperthermophilic, sulphate-reducing archaeon Archaeoglobus fulgidus.</title>
        <authorList>
            <person name="Klenk H.-P."/>
            <person name="Clayton R.A."/>
            <person name="Tomb J.-F."/>
            <person name="White O."/>
            <person name="Nelson K.E."/>
            <person name="Ketchum K.A."/>
            <person name="Dodson R.J."/>
            <person name="Gwinn M.L."/>
            <person name="Hickey E.K."/>
            <person name="Peterson J.D."/>
            <person name="Richardson D.L."/>
            <person name="Kerlavage A.R."/>
            <person name="Graham D.E."/>
            <person name="Kyrpides N.C."/>
            <person name="Fleischmann R.D."/>
            <person name="Quackenbush J."/>
            <person name="Lee N.H."/>
            <person name="Sutton G.G."/>
            <person name="Gill S.R."/>
            <person name="Kirkness E.F."/>
            <person name="Dougherty B.A."/>
            <person name="McKenney K."/>
            <person name="Adams M.D."/>
            <person name="Loftus B.J."/>
            <person name="Peterson S.N."/>
            <person name="Reich C.I."/>
            <person name="McNeil L.K."/>
            <person name="Badger J.H."/>
            <person name="Glodek A."/>
            <person name="Zhou L."/>
            <person name="Overbeek R."/>
            <person name="Gocayne J.D."/>
            <person name="Weidman J.F."/>
            <person name="McDonald L.A."/>
            <person name="Utterback T.R."/>
            <person name="Cotton M.D."/>
            <person name="Spriggs T."/>
            <person name="Artiach P."/>
            <person name="Kaine B.P."/>
            <person name="Sykes S.M."/>
            <person name="Sadow P.W."/>
            <person name="D'Andrea K.P."/>
            <person name="Bowman C."/>
            <person name="Fujii C."/>
            <person name="Garland S.A."/>
            <person name="Mason T.M."/>
            <person name="Olsen G.J."/>
            <person name="Fraser C.M."/>
            <person name="Smith H.O."/>
            <person name="Woese C.R."/>
            <person name="Venter J.C."/>
        </authorList>
    </citation>
    <scope>NUCLEOTIDE SEQUENCE [LARGE SCALE GENOMIC DNA]</scope>
    <source>
        <strain>ATCC 49558 / DSM 4304 / JCM 9628 / NBRC 100126 / VC-16</strain>
    </source>
</reference>
<reference key="2">
    <citation type="journal article" date="2005" name="Mol. Cell">
        <title>Structural framework for the mechanism of archaeal exosomes in RNA processing.</title>
        <authorList>
            <person name="Buttner K."/>
            <person name="Wenig K."/>
            <person name="Hopfner K.P."/>
        </authorList>
    </citation>
    <scope>X-RAY CRYSTALLOGRAPHY (2.70 ANGSTROMS) IN COMPLEX WITH RRP41; RRP4 AND CSL4</scope>
    <scope>SUBUNIT</scope>
</reference>
<reference key="3">
    <citation type="journal article" date="2010" name="Nucleic Acids Res.">
        <title>Quantitative analysis of processive RNA degradation by the archaeal RNA exosome.</title>
        <authorList>
            <person name="Hartung S."/>
            <person name="Niederberger T."/>
            <person name="Hartung M."/>
            <person name="Tresch A."/>
            <person name="Hopfner K.P."/>
        </authorList>
    </citation>
    <scope>X-RAY CRYSTALLOGRAPHY (2.40 ANGSTROMS) IN COMPLEX WITH RRP41 AND CSL4</scope>
    <scope>SUBUNIT</scope>
</reference>
<protein>
    <recommendedName>
        <fullName evidence="1">Exosome complex component Rrp42</fullName>
    </recommendedName>
</protein>
<comment type="function">
    <text evidence="1">Non-catalytic component of the exosome, which is a complex involved in RNA degradation. Contributes to the structuring of the Rrp41 active site.</text>
</comment>
<comment type="subunit">
    <text evidence="1 2 3">Component of the archaeal exosome complex. Forms a hexameric ring-like arrangement composed of 3 Rrp41-Rrp42 heterodimers. The hexameric ring associates with a trimer of Rrp4 and/or Csl4 subunits.</text>
</comment>
<comment type="subcellular location">
    <subcellularLocation>
        <location evidence="1">Cytoplasm</location>
    </subcellularLocation>
</comment>
<comment type="similarity">
    <text evidence="1">Belongs to the RNase PH family. Rrp42 subfamily.</text>
</comment>
<feature type="chain" id="PRO_0000139996" description="Exosome complex component Rrp42">
    <location>
        <begin position="1"/>
        <end position="259"/>
    </location>
</feature>
<feature type="helix" evidence="4">
    <location>
        <begin position="5"/>
        <end position="19"/>
    </location>
</feature>
<feature type="strand" evidence="4">
    <location>
        <begin position="35"/>
        <end position="39"/>
    </location>
</feature>
<feature type="strand" evidence="4">
    <location>
        <begin position="45"/>
        <end position="53"/>
    </location>
</feature>
<feature type="strand" evidence="4">
    <location>
        <begin position="56"/>
        <end position="67"/>
    </location>
</feature>
<feature type="strand" evidence="4">
    <location>
        <begin position="78"/>
        <end position="84"/>
    </location>
</feature>
<feature type="strand" evidence="5">
    <location>
        <begin position="91"/>
        <end position="93"/>
    </location>
</feature>
<feature type="strand" evidence="4">
    <location>
        <begin position="95"/>
        <end position="98"/>
    </location>
</feature>
<feature type="helix" evidence="4">
    <location>
        <begin position="100"/>
        <end position="115"/>
    </location>
</feature>
<feature type="helix" evidence="4">
    <location>
        <begin position="121"/>
        <end position="124"/>
    </location>
</feature>
<feature type="strand" evidence="4">
    <location>
        <begin position="125"/>
        <end position="127"/>
    </location>
</feature>
<feature type="turn" evidence="4">
    <location>
        <begin position="128"/>
        <end position="130"/>
    </location>
</feature>
<feature type="strand" evidence="4">
    <location>
        <begin position="131"/>
        <end position="143"/>
    </location>
</feature>
<feature type="helix" evidence="4">
    <location>
        <begin position="148"/>
        <end position="161"/>
    </location>
</feature>
<feature type="helix" evidence="4">
    <location>
        <begin position="168"/>
        <end position="170"/>
    </location>
</feature>
<feature type="strand" evidence="4">
    <location>
        <begin position="172"/>
        <end position="174"/>
    </location>
</feature>
<feature type="strand" evidence="4">
    <location>
        <begin position="185"/>
        <end position="192"/>
    </location>
</feature>
<feature type="strand" evidence="4">
    <location>
        <begin position="195"/>
        <end position="199"/>
    </location>
</feature>
<feature type="helix" evidence="4">
    <location>
        <begin position="204"/>
        <end position="207"/>
    </location>
</feature>
<feature type="strand" evidence="4">
    <location>
        <begin position="211"/>
        <end position="216"/>
    </location>
</feature>
<feature type="strand" evidence="4">
    <location>
        <begin position="222"/>
        <end position="230"/>
    </location>
</feature>
<feature type="helix" evidence="4">
    <location>
        <begin position="235"/>
        <end position="254"/>
    </location>
</feature>